<accession>O29161</accession>
<feature type="chain" id="PRO_0000447507" description="Damage-control phosphatase AF_1104">
    <location>
        <begin position="1"/>
        <end position="288"/>
    </location>
</feature>
<feature type="short sequence motif" description="Subfamily I CxxC motif" evidence="5">
    <location>
        <begin position="7"/>
        <end position="10"/>
    </location>
</feature>
<feature type="short sequence motif" description="Subfamily I GNFE-like motif" evidence="5">
    <location>
        <begin position="247"/>
        <end position="250"/>
    </location>
</feature>
<feature type="short sequence motif" description="Subfamily I KC motif" evidence="5">
    <location>
        <begin position="267"/>
        <end position="268"/>
    </location>
</feature>
<feature type="binding site" evidence="2">
    <location>
        <position position="160"/>
    </location>
    <ligand>
        <name>Mn(2+)</name>
        <dbReference type="ChEBI" id="CHEBI:29035"/>
        <note>catalytic</note>
    </ligand>
</feature>
<feature type="binding site" evidence="2">
    <location>
        <position position="161"/>
    </location>
    <ligand>
        <name>Mn(2+)</name>
        <dbReference type="ChEBI" id="CHEBI:29035"/>
        <note>catalytic</note>
    </ligand>
</feature>
<feature type="binding site" evidence="2">
    <location>
        <position position="194"/>
    </location>
    <ligand>
        <name>Mn(2+)</name>
        <dbReference type="ChEBI" id="CHEBI:29035"/>
        <note>catalytic</note>
    </ligand>
</feature>
<feature type="helix" evidence="7">
    <location>
        <begin position="9"/>
        <end position="22"/>
    </location>
</feature>
<feature type="helix" evidence="7">
    <location>
        <begin position="26"/>
        <end position="42"/>
    </location>
</feature>
<feature type="helix" evidence="7">
    <location>
        <begin position="51"/>
        <end position="65"/>
    </location>
</feature>
<feature type="helix" evidence="7">
    <location>
        <begin position="72"/>
        <end position="95"/>
    </location>
</feature>
<feature type="strand" evidence="7">
    <location>
        <begin position="96"/>
        <end position="98"/>
    </location>
</feature>
<feature type="helix" evidence="7">
    <location>
        <begin position="99"/>
        <end position="109"/>
    </location>
</feature>
<feature type="helix" evidence="7">
    <location>
        <begin position="110"/>
        <end position="112"/>
    </location>
</feature>
<feature type="helix" evidence="7">
    <location>
        <begin position="123"/>
        <end position="137"/>
    </location>
</feature>
<feature type="strand" evidence="7">
    <location>
        <begin position="140"/>
        <end position="142"/>
    </location>
</feature>
<feature type="helix" evidence="7">
    <location>
        <begin position="144"/>
        <end position="150"/>
    </location>
</feature>
<feature type="strand" evidence="7">
    <location>
        <begin position="153"/>
        <end position="158"/>
    </location>
</feature>
<feature type="helix" evidence="7">
    <location>
        <begin position="164"/>
        <end position="176"/>
    </location>
</feature>
<feature type="strand" evidence="7">
    <location>
        <begin position="180"/>
        <end position="189"/>
    </location>
</feature>
<feature type="helix" evidence="7">
    <location>
        <begin position="197"/>
        <end position="202"/>
    </location>
</feature>
<feature type="helix" evidence="7">
    <location>
        <begin position="205"/>
        <end position="208"/>
    </location>
</feature>
<feature type="strand" evidence="7">
    <location>
        <begin position="209"/>
        <end position="214"/>
    </location>
</feature>
<feature type="helix" evidence="7">
    <location>
        <begin position="224"/>
        <end position="226"/>
    </location>
</feature>
<feature type="helix" evidence="7">
    <location>
        <begin position="229"/>
        <end position="237"/>
    </location>
</feature>
<feature type="strand" evidence="7">
    <location>
        <begin position="239"/>
        <end position="245"/>
    </location>
</feature>
<feature type="helix" evidence="7">
    <location>
        <begin position="246"/>
        <end position="252"/>
    </location>
</feature>
<feature type="strand" evidence="7">
    <location>
        <begin position="259"/>
        <end position="265"/>
    </location>
</feature>
<feature type="helix" evidence="7">
    <location>
        <begin position="269"/>
        <end position="275"/>
    </location>
</feature>
<feature type="strand" evidence="7">
    <location>
        <begin position="282"/>
        <end position="287"/>
    </location>
</feature>
<organism>
    <name type="scientific">Archaeoglobus fulgidus (strain ATCC 49558 / DSM 4304 / JCM 9628 / NBRC 100126 / VC-16)</name>
    <dbReference type="NCBI Taxonomy" id="224325"/>
    <lineage>
        <taxon>Archaea</taxon>
        <taxon>Methanobacteriati</taxon>
        <taxon>Methanobacteriota</taxon>
        <taxon>Archaeoglobi</taxon>
        <taxon>Archaeoglobales</taxon>
        <taxon>Archaeoglobaceae</taxon>
        <taxon>Archaeoglobus</taxon>
    </lineage>
</organism>
<keyword id="KW-0002">3D-structure</keyword>
<keyword id="KW-0378">Hydrolase</keyword>
<keyword id="KW-0464">Manganese</keyword>
<keyword id="KW-0479">Metal-binding</keyword>
<keyword id="KW-0533">Nickel</keyword>
<keyword id="KW-1185">Reference proteome</keyword>
<protein>
    <recommendedName>
        <fullName evidence="3">Damage-control phosphatase AF_1104</fullName>
        <ecNumber evidence="1">3.1.3.-</ecNumber>
    </recommendedName>
    <alternativeName>
        <fullName evidence="3">Nucleotides phosphatase AF_1104</fullName>
    </alternativeName>
</protein>
<sequence length="288" mass="31981">MKISPLCPSCLLGRVYYEAKLVTDDEDLISQCVDESLKILAENYSSRPINAHLATRIHRRVYEILGVEDPYAEVKARANEVARQVLPLAKEIVEGSDDPFKTAVIVSIVGNNFDYGVQGHKVVEEEFRDFLKRKVQEGLKINDTERIKELSSGKVVYLTDNAGEIFFDTLLMKEIKRRCEKLTAVVRGRPIISDATIEDARLARVDKIADELLTNGKGAIGIIMDELPDETRKALEEADLIVAKGMANYECLSDGSLKPIAFLLTAKCEPVARDIGVNVGDMVAKVVE</sequence>
<reference key="1">
    <citation type="journal article" date="1997" name="Nature">
        <title>The complete genome sequence of the hyperthermophilic, sulphate-reducing archaeon Archaeoglobus fulgidus.</title>
        <authorList>
            <person name="Klenk H.-P."/>
            <person name="Clayton R.A."/>
            <person name="Tomb J.-F."/>
            <person name="White O."/>
            <person name="Nelson K.E."/>
            <person name="Ketchum K.A."/>
            <person name="Dodson R.J."/>
            <person name="Gwinn M.L."/>
            <person name="Hickey E.K."/>
            <person name="Peterson J.D."/>
            <person name="Richardson D.L."/>
            <person name="Kerlavage A.R."/>
            <person name="Graham D.E."/>
            <person name="Kyrpides N.C."/>
            <person name="Fleischmann R.D."/>
            <person name="Quackenbush J."/>
            <person name="Lee N.H."/>
            <person name="Sutton G.G."/>
            <person name="Gill S.R."/>
            <person name="Kirkness E.F."/>
            <person name="Dougherty B.A."/>
            <person name="McKenney K."/>
            <person name="Adams M.D."/>
            <person name="Loftus B.J."/>
            <person name="Peterson S.N."/>
            <person name="Reich C.I."/>
            <person name="McNeil L.K."/>
            <person name="Badger J.H."/>
            <person name="Glodek A."/>
            <person name="Zhou L."/>
            <person name="Overbeek R."/>
            <person name="Gocayne J.D."/>
            <person name="Weidman J.F."/>
            <person name="McDonald L.A."/>
            <person name="Utterback T.R."/>
            <person name="Cotton M.D."/>
            <person name="Spriggs T."/>
            <person name="Artiach P."/>
            <person name="Kaine B.P."/>
            <person name="Sykes S.M."/>
            <person name="Sadow P.W."/>
            <person name="D'Andrea K.P."/>
            <person name="Bowman C."/>
            <person name="Fujii C."/>
            <person name="Garland S.A."/>
            <person name="Mason T.M."/>
            <person name="Olsen G.J."/>
            <person name="Fraser C.M."/>
            <person name="Smith H.O."/>
            <person name="Woese C.R."/>
            <person name="Venter J.C."/>
        </authorList>
    </citation>
    <scope>NUCLEOTIDE SEQUENCE [LARGE SCALE GENOMIC DNA]</scope>
    <source>
        <strain>ATCC 49558 / DSM 4304 / JCM 9628 / NBRC 100126 / VC-16</strain>
    </source>
</reference>
<reference key="2">
    <citation type="journal article" date="2016" name="Nat. Chem. Biol.">
        <title>A family of metal-dependent phosphatases implicated in metabolite damage-control.</title>
        <authorList>
            <person name="Huang L."/>
            <person name="Khusnutdinova A."/>
            <person name="Nocek B."/>
            <person name="Brown G."/>
            <person name="Xu X."/>
            <person name="Cui H."/>
            <person name="Petit P."/>
            <person name="Flick R."/>
            <person name="Zallot R."/>
            <person name="Balmant K."/>
            <person name="Ziemak M.J."/>
            <person name="Shanklin J."/>
            <person name="de Crecy-Lagard V."/>
            <person name="Fiehn O."/>
            <person name="Gregory J.F. III"/>
            <person name="Joachimiak A."/>
            <person name="Savchenko A."/>
            <person name="Yakunin A.F."/>
            <person name="Hanson A.D."/>
        </authorList>
    </citation>
    <scope>DOMAIN</scope>
</reference>
<reference evidence="6" key="3">
    <citation type="submission" date="2005-12" db="PDB data bank">
        <title>Crystal structure of (2649480) from ARCHAEOGLOBUS FULGIDUS at 2.45 A resolution.</title>
        <authorList>
            <consortium name="Joint Center for Structural Genomics (JCSG)"/>
        </authorList>
    </citation>
    <scope>X-RAY CRYSTALLOGRAPHY (2.45 ANGSTROMS)</scope>
</reference>
<dbReference type="EC" id="3.1.3.-" evidence="1"/>
<dbReference type="EMBL" id="AE000782">
    <property type="protein sequence ID" value="AAB90134.1"/>
    <property type="molecule type" value="Genomic_DNA"/>
</dbReference>
<dbReference type="PIR" id="G69387">
    <property type="entry name" value="G69387"/>
</dbReference>
<dbReference type="RefSeq" id="WP_010878600.1">
    <property type="nucleotide sequence ID" value="NC_000917.1"/>
</dbReference>
<dbReference type="PDB" id="2FFJ">
    <property type="method" value="X-ray"/>
    <property type="resolution" value="2.45 A"/>
    <property type="chains" value="A/B=1-288"/>
</dbReference>
<dbReference type="PDBsum" id="2FFJ"/>
<dbReference type="SMR" id="O29161"/>
<dbReference type="STRING" id="224325.AF_1104"/>
<dbReference type="PaxDb" id="224325-AF_1104"/>
<dbReference type="DNASU" id="1484326"/>
<dbReference type="EnsemblBacteria" id="AAB90134">
    <property type="protein sequence ID" value="AAB90134"/>
    <property type="gene ID" value="AF_1104"/>
</dbReference>
<dbReference type="KEGG" id="afu:AF_1104"/>
<dbReference type="eggNOG" id="arCOG04410">
    <property type="taxonomic scope" value="Archaea"/>
</dbReference>
<dbReference type="HOGENOM" id="CLU_071520_1_0_2"/>
<dbReference type="OrthoDB" id="359165at2157"/>
<dbReference type="PhylomeDB" id="O29161"/>
<dbReference type="EvolutionaryTrace" id="O29161"/>
<dbReference type="Proteomes" id="UP000002199">
    <property type="component" value="Chromosome"/>
</dbReference>
<dbReference type="GO" id="GO:0016787">
    <property type="term" value="F:hydrolase activity"/>
    <property type="evidence" value="ECO:0007669"/>
    <property type="project" value="UniProtKB-KW"/>
</dbReference>
<dbReference type="GO" id="GO:0046872">
    <property type="term" value="F:metal ion binding"/>
    <property type="evidence" value="ECO:0007669"/>
    <property type="project" value="UniProtKB-KW"/>
</dbReference>
<dbReference type="Gene3D" id="1.10.8.380">
    <property type="entry name" value="Uncharacterised protein PF01937, DUF89, domain 1"/>
    <property type="match status" value="1"/>
</dbReference>
<dbReference type="Gene3D" id="1.10.285.20">
    <property type="entry name" value="Uncharacterised protein PF01937, DUF89, domain 2"/>
    <property type="match status" value="1"/>
</dbReference>
<dbReference type="Gene3D" id="3.40.50.10880">
    <property type="entry name" value="Uncharacterised protein PF01937, DUF89, domain 3"/>
    <property type="match status" value="1"/>
</dbReference>
<dbReference type="InterPro" id="IPR036075">
    <property type="entry name" value="ARMT-1-like_metal-bd_sf"/>
</dbReference>
<dbReference type="InterPro" id="IPR002791">
    <property type="entry name" value="ARMT1-like_metal-bd"/>
</dbReference>
<dbReference type="InterPro" id="IPR053682">
    <property type="entry name" value="Damage-ctrl_phosphatase"/>
</dbReference>
<dbReference type="InterPro" id="IPR014444">
    <property type="entry name" value="PH1575-like"/>
</dbReference>
<dbReference type="NCBIfam" id="NF041594">
    <property type="entry name" value="dam_ctlPhtase_Archglob"/>
    <property type="match status" value="1"/>
</dbReference>
<dbReference type="Pfam" id="PF01937">
    <property type="entry name" value="ARMT1-like_dom"/>
    <property type="match status" value="1"/>
</dbReference>
<dbReference type="PIRSF" id="PIRSF006593">
    <property type="entry name" value="UCP006593"/>
    <property type="match status" value="1"/>
</dbReference>
<dbReference type="SUPFAM" id="SSF111321">
    <property type="entry name" value="AF1104-like"/>
    <property type="match status" value="1"/>
</dbReference>
<proteinExistence type="evidence at protein level"/>
<evidence type="ECO:0000250" key="1">
    <source>
        <dbReference type="UniProtKB" id="O59272"/>
    </source>
</evidence>
<evidence type="ECO:0000250" key="2">
    <source>
        <dbReference type="UniProtKB" id="Q04371"/>
    </source>
</evidence>
<evidence type="ECO:0000303" key="3">
    <source>
    </source>
</evidence>
<evidence type="ECO:0000305" key="4"/>
<evidence type="ECO:0000305" key="5">
    <source>
    </source>
</evidence>
<evidence type="ECO:0007744" key="6">
    <source>
        <dbReference type="PDB" id="2FFJ"/>
    </source>
</evidence>
<evidence type="ECO:0007829" key="7">
    <source>
        <dbReference type="PDB" id="2FFJ"/>
    </source>
</evidence>
<comment type="function">
    <text evidence="1">Metal-dependent phosphatase with probable damage-control functions (By similarity). Could hydrolyze oxidatively damaged purine nucleotides or their biosynthetic intermediates (By similarity).</text>
</comment>
<comment type="cofactor">
    <cofactor evidence="1">
        <name>[2Fe-2S] cluster</name>
        <dbReference type="ChEBI" id="CHEBI:190135"/>
    </cofactor>
    <cofactor evidence="1">
        <name>Mn(2+)</name>
        <dbReference type="ChEBI" id="CHEBI:29035"/>
    </cofactor>
    <cofactor evidence="1">
        <name>Ni(2+)</name>
        <dbReference type="ChEBI" id="CHEBI:49786"/>
    </cofactor>
</comment>
<comment type="domain">
    <text evidence="5">Subfamily I proteins are distinguished by three conserved motifs: the CxxC motif localized near the N-terminus, the GNFE motif localized about 40 residues from the C-terminus, and the KC motif localized about 25 residues from the C-terminus (Probable). In the crystal structures of the subfamily I proteins, the side chains of the cysteines in the CxxC and KC motifs face each other across the rim of the putative substrate-binding cleft, and the GNFE motif lies deep in the cleft close to the metal-binding aspartate and asparagine (Probable). the 3 conserved cysteines in motifs CxxC and KC play a key role in the interaction with the Fe-containing chromophore, which is not directly involved in catalysis (Probable).</text>
</comment>
<comment type="similarity">
    <text evidence="4">Belongs to the damage-control phosphatase family. Nucleotides phosphatase I subfamily.</text>
</comment>
<gene>
    <name type="ordered locus">AF_1104</name>
</gene>
<name>D89S1_ARCFU</name>